<evidence type="ECO:0000255" key="1">
    <source>
        <dbReference type="HAMAP-Rule" id="MF_01674"/>
    </source>
</evidence>
<name>SEPS_METMJ</name>
<gene>
    <name evidence="1" type="primary">sepS</name>
    <name type="ordered locus">Memar_2215</name>
</gene>
<feature type="chain" id="PRO_0000363756" description="O-phosphoserine--tRNA(Cys) ligase">
    <location>
        <begin position="1"/>
        <end position="531"/>
    </location>
</feature>
<feature type="binding site" evidence="1">
    <location>
        <begin position="189"/>
        <end position="191"/>
    </location>
    <ligand>
        <name>substrate</name>
    </ligand>
</feature>
<feature type="binding site" evidence="1">
    <location>
        <begin position="234"/>
        <end position="236"/>
    </location>
    <ligand>
        <name>substrate</name>
    </ligand>
</feature>
<feature type="binding site" evidence="1">
    <location>
        <begin position="276"/>
        <end position="277"/>
    </location>
    <ligand>
        <name>substrate</name>
    </ligand>
</feature>
<feature type="binding site" evidence="1">
    <location>
        <position position="319"/>
    </location>
    <ligand>
        <name>substrate</name>
    </ligand>
</feature>
<sequence length="531" mass="59427">MRFDVEEFKKRAREDFEHAWHEGPSVLTPAGVSGRYPRLRYTRATPHPIFEIVQRLRETYLAMGFDEAMNPLIVEESDIYRQFGPEAMAVLDRVFYLGGLPRPNVGIARKQLDEIEAILGRAVSPGTEEKLRETLHGYKKGTIDGDELTHELAAVLEADDAAVVHILDAVFPEFRELAPESSRNTLRSHMTSGWFLTLSSLWEKRHLPIRLFSVDRCFRREQEEGPTRLMAYHSASCVVAGEDVTLEEGKAISEALLSAFGFTEFRFQPDEKRSKYYMPETQTEVYARHPVLGWVEVATFGIYSPSALAEYGIGVPVMNLGLGVERLAMIAYQSNDIRQLTHPQFFPQEISDREVAGAVHLREEPRTVAGKRMAEAIRATAAEHATAPGPCAFTAWKGEIAGREVEVIVEEPESNTKLCGPACANEVFVHDGSVLGVPDIEKWATVRQEGVSTGITYLDAVSSLAAARIEEAARCGEEAHVQVKMSKLPSDVNLRIEEYAMRHITDHNKKVDLRGPVFLTVRSVIPEQPTR</sequence>
<dbReference type="EC" id="6.1.1.27" evidence="1"/>
<dbReference type="EMBL" id="CP000562">
    <property type="protein sequence ID" value="ABN58138.1"/>
    <property type="molecule type" value="Genomic_DNA"/>
</dbReference>
<dbReference type="RefSeq" id="WP_011845047.1">
    <property type="nucleotide sequence ID" value="NC_009051.1"/>
</dbReference>
<dbReference type="SMR" id="A3CXN8"/>
<dbReference type="STRING" id="368407.Memar_2215"/>
<dbReference type="GeneID" id="4848114"/>
<dbReference type="GeneID" id="76730297"/>
<dbReference type="KEGG" id="mem:Memar_2215"/>
<dbReference type="eggNOG" id="arCOG00411">
    <property type="taxonomic scope" value="Archaea"/>
</dbReference>
<dbReference type="HOGENOM" id="CLU_506822_0_0_2"/>
<dbReference type="OrthoDB" id="145125at2157"/>
<dbReference type="Proteomes" id="UP000002146">
    <property type="component" value="Chromosome"/>
</dbReference>
<dbReference type="GO" id="GO:0005524">
    <property type="term" value="F:ATP binding"/>
    <property type="evidence" value="ECO:0007669"/>
    <property type="project" value="UniProtKB-UniRule"/>
</dbReference>
<dbReference type="GO" id="GO:0043816">
    <property type="term" value="F:phosphoserine-tRNA(Cys) ligase activity"/>
    <property type="evidence" value="ECO:0007669"/>
    <property type="project" value="UniProtKB-EC"/>
</dbReference>
<dbReference type="GO" id="GO:0000049">
    <property type="term" value="F:tRNA binding"/>
    <property type="evidence" value="ECO:0007669"/>
    <property type="project" value="InterPro"/>
</dbReference>
<dbReference type="GO" id="GO:0006412">
    <property type="term" value="P:translation"/>
    <property type="evidence" value="ECO:0007669"/>
    <property type="project" value="UniProtKB-KW"/>
</dbReference>
<dbReference type="GO" id="GO:0043039">
    <property type="term" value="P:tRNA aminoacylation"/>
    <property type="evidence" value="ECO:0007669"/>
    <property type="project" value="UniProtKB-UniRule"/>
</dbReference>
<dbReference type="Gene3D" id="6.20.250.20">
    <property type="match status" value="1"/>
</dbReference>
<dbReference type="Gene3D" id="3.30.930.10">
    <property type="entry name" value="Bira Bifunctional Protein, Domain 2"/>
    <property type="match status" value="1"/>
</dbReference>
<dbReference type="HAMAP" id="MF_01674">
    <property type="entry name" value="Sep_tRNA_synth"/>
    <property type="match status" value="1"/>
</dbReference>
<dbReference type="InterPro" id="IPR006195">
    <property type="entry name" value="aa-tRNA-synth_II"/>
</dbReference>
<dbReference type="InterPro" id="IPR045864">
    <property type="entry name" value="aa-tRNA-synth_II/BPL/LPL"/>
</dbReference>
<dbReference type="InterPro" id="IPR005246">
    <property type="entry name" value="O-Pseryl-tRNA(Cys)_ligase"/>
</dbReference>
<dbReference type="InterPro" id="IPR002319">
    <property type="entry name" value="Phenylalanyl-tRNA_Synthase"/>
</dbReference>
<dbReference type="InterPro" id="IPR041590">
    <property type="entry name" value="SepRS_C"/>
</dbReference>
<dbReference type="NCBIfam" id="TIGR00470">
    <property type="entry name" value="sepS"/>
    <property type="match status" value="1"/>
</dbReference>
<dbReference type="Pfam" id="PF18006">
    <property type="entry name" value="SepRS_C"/>
    <property type="match status" value="1"/>
</dbReference>
<dbReference type="Pfam" id="PF01409">
    <property type="entry name" value="tRNA-synt_2d"/>
    <property type="match status" value="1"/>
</dbReference>
<dbReference type="SUPFAM" id="SSF55681">
    <property type="entry name" value="Class II aaRS and biotin synthetases"/>
    <property type="match status" value="1"/>
</dbReference>
<dbReference type="PROSITE" id="PS50862">
    <property type="entry name" value="AA_TRNA_LIGASE_II"/>
    <property type="match status" value="1"/>
</dbReference>
<reference key="1">
    <citation type="journal article" date="2009" name="Stand. Genomic Sci.">
        <title>Complete genome sequence of Methanoculleus marisnigri Romesser et al. 1981 type strain JR1.</title>
        <authorList>
            <person name="Anderson I.J."/>
            <person name="Sieprawska-Lupa M."/>
            <person name="Lapidus A."/>
            <person name="Nolan M."/>
            <person name="Copeland A."/>
            <person name="Glavina Del Rio T."/>
            <person name="Tice H."/>
            <person name="Dalin E."/>
            <person name="Barry K."/>
            <person name="Saunders E."/>
            <person name="Han C."/>
            <person name="Brettin T."/>
            <person name="Detter J.C."/>
            <person name="Bruce D."/>
            <person name="Mikhailova N."/>
            <person name="Pitluck S."/>
            <person name="Hauser L."/>
            <person name="Land M."/>
            <person name="Lucas S."/>
            <person name="Richardson P."/>
            <person name="Whitman W.B."/>
            <person name="Kyrpides N.C."/>
        </authorList>
    </citation>
    <scope>NUCLEOTIDE SEQUENCE [LARGE SCALE GENOMIC DNA]</scope>
    <source>
        <strain>ATCC 35101 / DSM 1498 / JR1</strain>
    </source>
</reference>
<proteinExistence type="inferred from homology"/>
<keyword id="KW-0030">Aminoacyl-tRNA synthetase</keyword>
<keyword id="KW-0067">ATP-binding</keyword>
<keyword id="KW-0436">Ligase</keyword>
<keyword id="KW-0547">Nucleotide-binding</keyword>
<keyword id="KW-0648">Protein biosynthesis</keyword>
<protein>
    <recommendedName>
        <fullName evidence="1">O-phosphoserine--tRNA(Cys) ligase</fullName>
        <shortName evidence="1">O-phosphoserine--tRNA ligase</shortName>
        <ecNumber evidence="1">6.1.1.27</ecNumber>
    </recommendedName>
    <alternativeName>
        <fullName evidence="1">Non-canonical O-phosphoseryl-tRNA(Cys) synthetase</fullName>
    </alternativeName>
    <alternativeName>
        <fullName evidence="1">O-phosphoseryl-tRNA(Cys) synthetase</fullName>
        <shortName evidence="1">SepRS</shortName>
    </alternativeName>
</protein>
<comment type="function">
    <text evidence="1">Catalyzes the attachment of O-phosphoserine (Sep) to tRNA(Cys).</text>
</comment>
<comment type="catalytic activity">
    <reaction evidence="1">
        <text>tRNA(Cys) + O-phospho-L-serine + ATP = O-phospho-L-seryl-tRNA(Cys) + AMP + diphosphate</text>
        <dbReference type="Rhea" id="RHEA:25678"/>
        <dbReference type="Rhea" id="RHEA-COMP:9661"/>
        <dbReference type="Rhea" id="RHEA-COMP:9719"/>
        <dbReference type="ChEBI" id="CHEBI:30616"/>
        <dbReference type="ChEBI" id="CHEBI:33019"/>
        <dbReference type="ChEBI" id="CHEBI:57524"/>
        <dbReference type="ChEBI" id="CHEBI:78442"/>
        <dbReference type="ChEBI" id="CHEBI:78551"/>
        <dbReference type="ChEBI" id="CHEBI:456215"/>
        <dbReference type="EC" id="6.1.1.27"/>
    </reaction>
</comment>
<comment type="subunit">
    <text evidence="1">Homotetramer. Interacts with SepCysS.</text>
</comment>
<comment type="similarity">
    <text evidence="1">Belongs to the class-II aminoacyl-tRNA synthetase family. O-phosphoseryl-tRNA(Cys) synthetase subfamily.</text>
</comment>
<organism>
    <name type="scientific">Methanoculleus marisnigri (strain ATCC 35101 / DSM 1498 / JR1)</name>
    <dbReference type="NCBI Taxonomy" id="368407"/>
    <lineage>
        <taxon>Archaea</taxon>
        <taxon>Methanobacteriati</taxon>
        <taxon>Methanobacteriota</taxon>
        <taxon>Stenosarchaea group</taxon>
        <taxon>Methanomicrobia</taxon>
        <taxon>Methanomicrobiales</taxon>
        <taxon>Methanomicrobiaceae</taxon>
        <taxon>Methanoculleus</taxon>
    </lineage>
</organism>
<accession>A3CXN8</accession>